<dbReference type="EC" id="4.2.3.4" evidence="1"/>
<dbReference type="EMBL" id="AP006618">
    <property type="protein sequence ID" value="BAD58485.1"/>
    <property type="molecule type" value="Genomic_DNA"/>
</dbReference>
<dbReference type="RefSeq" id="WP_011210170.1">
    <property type="nucleotide sequence ID" value="NC_006361.1"/>
</dbReference>
<dbReference type="SMR" id="Q5YTK6"/>
<dbReference type="STRING" id="247156.NFA_36370"/>
<dbReference type="GeneID" id="61134332"/>
<dbReference type="KEGG" id="nfa:NFA_36370"/>
<dbReference type="eggNOG" id="COG0337">
    <property type="taxonomic scope" value="Bacteria"/>
</dbReference>
<dbReference type="HOGENOM" id="CLU_001201_0_3_11"/>
<dbReference type="OrthoDB" id="9806583at2"/>
<dbReference type="UniPathway" id="UPA00053">
    <property type="reaction ID" value="UER00085"/>
</dbReference>
<dbReference type="Proteomes" id="UP000006820">
    <property type="component" value="Chromosome"/>
</dbReference>
<dbReference type="GO" id="GO:0005737">
    <property type="term" value="C:cytoplasm"/>
    <property type="evidence" value="ECO:0007669"/>
    <property type="project" value="UniProtKB-SubCell"/>
</dbReference>
<dbReference type="GO" id="GO:0003856">
    <property type="term" value="F:3-dehydroquinate synthase activity"/>
    <property type="evidence" value="ECO:0007669"/>
    <property type="project" value="UniProtKB-UniRule"/>
</dbReference>
<dbReference type="GO" id="GO:0046872">
    <property type="term" value="F:metal ion binding"/>
    <property type="evidence" value="ECO:0007669"/>
    <property type="project" value="UniProtKB-KW"/>
</dbReference>
<dbReference type="GO" id="GO:0000166">
    <property type="term" value="F:nucleotide binding"/>
    <property type="evidence" value="ECO:0007669"/>
    <property type="project" value="UniProtKB-KW"/>
</dbReference>
<dbReference type="GO" id="GO:0008652">
    <property type="term" value="P:amino acid biosynthetic process"/>
    <property type="evidence" value="ECO:0007669"/>
    <property type="project" value="UniProtKB-KW"/>
</dbReference>
<dbReference type="GO" id="GO:0009073">
    <property type="term" value="P:aromatic amino acid family biosynthetic process"/>
    <property type="evidence" value="ECO:0007669"/>
    <property type="project" value="UniProtKB-KW"/>
</dbReference>
<dbReference type="GO" id="GO:0009423">
    <property type="term" value="P:chorismate biosynthetic process"/>
    <property type="evidence" value="ECO:0007669"/>
    <property type="project" value="UniProtKB-UniRule"/>
</dbReference>
<dbReference type="CDD" id="cd08195">
    <property type="entry name" value="DHQS"/>
    <property type="match status" value="1"/>
</dbReference>
<dbReference type="FunFam" id="3.40.50.1970:FF:000012">
    <property type="entry name" value="3-dehydroquinate synthase"/>
    <property type="match status" value="1"/>
</dbReference>
<dbReference type="Gene3D" id="3.40.50.1970">
    <property type="match status" value="1"/>
</dbReference>
<dbReference type="Gene3D" id="1.20.1090.10">
    <property type="entry name" value="Dehydroquinate synthase-like - alpha domain"/>
    <property type="match status" value="1"/>
</dbReference>
<dbReference type="HAMAP" id="MF_00110">
    <property type="entry name" value="DHQ_synthase"/>
    <property type="match status" value="1"/>
</dbReference>
<dbReference type="InterPro" id="IPR050071">
    <property type="entry name" value="Dehydroquinate_synthase"/>
</dbReference>
<dbReference type="InterPro" id="IPR016037">
    <property type="entry name" value="DHQ_synth_AroB"/>
</dbReference>
<dbReference type="InterPro" id="IPR030963">
    <property type="entry name" value="DHQ_synth_fam"/>
</dbReference>
<dbReference type="InterPro" id="IPR030960">
    <property type="entry name" value="DHQS/DOIS_N"/>
</dbReference>
<dbReference type="InterPro" id="IPR056179">
    <property type="entry name" value="DHQS_C"/>
</dbReference>
<dbReference type="NCBIfam" id="TIGR01357">
    <property type="entry name" value="aroB"/>
    <property type="match status" value="1"/>
</dbReference>
<dbReference type="PANTHER" id="PTHR43622">
    <property type="entry name" value="3-DEHYDROQUINATE SYNTHASE"/>
    <property type="match status" value="1"/>
</dbReference>
<dbReference type="PANTHER" id="PTHR43622:SF7">
    <property type="entry name" value="3-DEHYDROQUINATE SYNTHASE, CHLOROPLASTIC"/>
    <property type="match status" value="1"/>
</dbReference>
<dbReference type="Pfam" id="PF01761">
    <property type="entry name" value="DHQ_synthase"/>
    <property type="match status" value="1"/>
</dbReference>
<dbReference type="Pfam" id="PF24621">
    <property type="entry name" value="DHQS_C"/>
    <property type="match status" value="1"/>
</dbReference>
<dbReference type="PIRSF" id="PIRSF001455">
    <property type="entry name" value="DHQ_synth"/>
    <property type="match status" value="1"/>
</dbReference>
<dbReference type="SUPFAM" id="SSF56796">
    <property type="entry name" value="Dehydroquinate synthase-like"/>
    <property type="match status" value="1"/>
</dbReference>
<proteinExistence type="inferred from homology"/>
<gene>
    <name evidence="1" type="primary">aroB</name>
    <name type="ordered locus">NFA_36370</name>
</gene>
<sequence>MTEPSRIQVRTADPYPVIIGRGLLGELVESVTGATSGVRTVAIFYQPPLAETAEVVRKALADTGIDAHRVEIPDAEAGKDLAVAGFCWEVLGRIGLTRNDVVVSLGGGAATDLAGFVAATWMRGVRIVHVPTTLLAMVDAAVGGKTGINTEAGKNLVGCFHEPTAVLVDLATLETVPRNEIVAGMAEIIKAGFIADPVILELVERDPQAALDPAGPVLPELIRRAIQVKADVVAADLKESSLREILNYGHTLGHAIERRERYRWRHGAAVAVGLVFAAELGRLAGRLDDATADRHRTILEAVGLPTTYDADALPQLLDAMQTDKKTRSGVLRFVVLDGLAKPGRLEGPDPSLLAAAYSAIAREESPSGGAILL</sequence>
<reference key="1">
    <citation type="journal article" date="2004" name="Proc. Natl. Acad. Sci. U.S.A.">
        <title>The complete genomic sequence of Nocardia farcinica IFM 10152.</title>
        <authorList>
            <person name="Ishikawa J."/>
            <person name="Yamashita A."/>
            <person name="Mikami Y."/>
            <person name="Hoshino Y."/>
            <person name="Kurita H."/>
            <person name="Hotta K."/>
            <person name="Shiba T."/>
            <person name="Hattori M."/>
        </authorList>
    </citation>
    <scope>NUCLEOTIDE SEQUENCE [LARGE SCALE GENOMIC DNA]</scope>
    <source>
        <strain>IFM 10152</strain>
    </source>
</reference>
<protein>
    <recommendedName>
        <fullName evidence="1">3-dehydroquinate synthase</fullName>
        <shortName evidence="1">DHQS</shortName>
        <ecNumber evidence="1">4.2.3.4</ecNumber>
    </recommendedName>
</protein>
<name>AROB_NOCFA</name>
<feature type="chain" id="PRO_0000231104" description="3-dehydroquinate synthase">
    <location>
        <begin position="1"/>
        <end position="373"/>
    </location>
</feature>
<feature type="binding site" evidence="1">
    <location>
        <begin position="74"/>
        <end position="79"/>
    </location>
    <ligand>
        <name>NAD(+)</name>
        <dbReference type="ChEBI" id="CHEBI:57540"/>
    </ligand>
</feature>
<feature type="binding site" evidence="1">
    <location>
        <begin position="108"/>
        <end position="112"/>
    </location>
    <ligand>
        <name>NAD(+)</name>
        <dbReference type="ChEBI" id="CHEBI:57540"/>
    </ligand>
</feature>
<feature type="binding site" evidence="1">
    <location>
        <begin position="132"/>
        <end position="133"/>
    </location>
    <ligand>
        <name>NAD(+)</name>
        <dbReference type="ChEBI" id="CHEBI:57540"/>
    </ligand>
</feature>
<feature type="binding site" evidence="1">
    <location>
        <position position="145"/>
    </location>
    <ligand>
        <name>NAD(+)</name>
        <dbReference type="ChEBI" id="CHEBI:57540"/>
    </ligand>
</feature>
<feature type="binding site" evidence="1">
    <location>
        <position position="154"/>
    </location>
    <ligand>
        <name>NAD(+)</name>
        <dbReference type="ChEBI" id="CHEBI:57540"/>
    </ligand>
</feature>
<feature type="binding site" evidence="1">
    <location>
        <begin position="172"/>
        <end position="175"/>
    </location>
    <ligand>
        <name>NAD(+)</name>
        <dbReference type="ChEBI" id="CHEBI:57540"/>
    </ligand>
</feature>
<feature type="binding site" evidence="1">
    <location>
        <position position="187"/>
    </location>
    <ligand>
        <name>Zn(2+)</name>
        <dbReference type="ChEBI" id="CHEBI:29105"/>
    </ligand>
</feature>
<feature type="binding site" evidence="1">
    <location>
        <position position="250"/>
    </location>
    <ligand>
        <name>Zn(2+)</name>
        <dbReference type="ChEBI" id="CHEBI:29105"/>
    </ligand>
</feature>
<feature type="binding site" evidence="1">
    <location>
        <position position="266"/>
    </location>
    <ligand>
        <name>Zn(2+)</name>
        <dbReference type="ChEBI" id="CHEBI:29105"/>
    </ligand>
</feature>
<evidence type="ECO:0000255" key="1">
    <source>
        <dbReference type="HAMAP-Rule" id="MF_00110"/>
    </source>
</evidence>
<comment type="function">
    <text evidence="1">Catalyzes the conversion of 3-deoxy-D-arabino-heptulosonate 7-phosphate (DAHP) to dehydroquinate (DHQ).</text>
</comment>
<comment type="catalytic activity">
    <reaction evidence="1">
        <text>7-phospho-2-dehydro-3-deoxy-D-arabino-heptonate = 3-dehydroquinate + phosphate</text>
        <dbReference type="Rhea" id="RHEA:21968"/>
        <dbReference type="ChEBI" id="CHEBI:32364"/>
        <dbReference type="ChEBI" id="CHEBI:43474"/>
        <dbReference type="ChEBI" id="CHEBI:58394"/>
        <dbReference type="EC" id="4.2.3.4"/>
    </reaction>
</comment>
<comment type="cofactor">
    <cofactor evidence="1">
        <name>Co(2+)</name>
        <dbReference type="ChEBI" id="CHEBI:48828"/>
    </cofactor>
    <cofactor evidence="1">
        <name>Zn(2+)</name>
        <dbReference type="ChEBI" id="CHEBI:29105"/>
    </cofactor>
    <text evidence="1">Binds 1 divalent metal cation per subunit. Can use either Co(2+) or Zn(2+).</text>
</comment>
<comment type="cofactor">
    <cofactor evidence="1">
        <name>NAD(+)</name>
        <dbReference type="ChEBI" id="CHEBI:57540"/>
    </cofactor>
</comment>
<comment type="pathway">
    <text evidence="1">Metabolic intermediate biosynthesis; chorismate biosynthesis; chorismate from D-erythrose 4-phosphate and phosphoenolpyruvate: step 2/7.</text>
</comment>
<comment type="subcellular location">
    <subcellularLocation>
        <location evidence="1">Cytoplasm</location>
    </subcellularLocation>
</comment>
<comment type="similarity">
    <text evidence="1">Belongs to the sugar phosphate cyclases superfamily. Dehydroquinate synthase family.</text>
</comment>
<keyword id="KW-0028">Amino-acid biosynthesis</keyword>
<keyword id="KW-0057">Aromatic amino acid biosynthesis</keyword>
<keyword id="KW-0170">Cobalt</keyword>
<keyword id="KW-0963">Cytoplasm</keyword>
<keyword id="KW-0456">Lyase</keyword>
<keyword id="KW-0479">Metal-binding</keyword>
<keyword id="KW-0520">NAD</keyword>
<keyword id="KW-0547">Nucleotide-binding</keyword>
<keyword id="KW-1185">Reference proteome</keyword>
<keyword id="KW-0862">Zinc</keyword>
<accession>Q5YTK6</accession>
<organism>
    <name type="scientific">Nocardia farcinica (strain IFM 10152)</name>
    <dbReference type="NCBI Taxonomy" id="247156"/>
    <lineage>
        <taxon>Bacteria</taxon>
        <taxon>Bacillati</taxon>
        <taxon>Actinomycetota</taxon>
        <taxon>Actinomycetes</taxon>
        <taxon>Mycobacteriales</taxon>
        <taxon>Nocardiaceae</taxon>
        <taxon>Nocardia</taxon>
    </lineage>
</organism>